<proteinExistence type="evidence at protein level"/>
<protein>
    <recommendedName>
        <fullName>Keratin, type II cytoskeletal 1</fullName>
    </recommendedName>
    <alternativeName>
        <fullName>67 kDa cytokeratin</fullName>
    </alternativeName>
    <alternativeName>
        <fullName>Cytokeratin-1</fullName>
        <shortName>CK-1</shortName>
    </alternativeName>
    <alternativeName>
        <fullName>Keratin-1</fullName>
        <shortName>K1</shortName>
    </alternativeName>
    <alternativeName>
        <fullName>Type-II keratin Kb1</fullName>
    </alternativeName>
</protein>
<dbReference type="EMBL" id="M10937">
    <property type="protein sequence ID" value="AAD05191.1"/>
    <property type="molecule type" value="mRNA"/>
</dbReference>
<dbReference type="EMBL" id="AK019521">
    <property type="protein sequence ID" value="BAB31776.1"/>
    <property type="molecule type" value="mRNA"/>
</dbReference>
<dbReference type="EMBL" id="BC117842">
    <property type="protein sequence ID" value="AAI17843.1"/>
    <property type="molecule type" value="mRNA"/>
</dbReference>
<dbReference type="EMBL" id="BC117843">
    <property type="protein sequence ID" value="AAI17844.1"/>
    <property type="molecule type" value="mRNA"/>
</dbReference>
<dbReference type="CCDS" id="CCDS37221.1"/>
<dbReference type="PIR" id="A02951">
    <property type="entry name" value="KRMS2"/>
</dbReference>
<dbReference type="RefSeq" id="NP_032499.2">
    <property type="nucleotide sequence ID" value="NM_008473.2"/>
</dbReference>
<dbReference type="SMR" id="P04104"/>
<dbReference type="BioGRID" id="201030">
    <property type="interactions" value="22"/>
</dbReference>
<dbReference type="ComplexPortal" id="CPX-5871">
    <property type="entry name" value="Keratin-1 - Keratin-10 dimer complex"/>
</dbReference>
<dbReference type="FunCoup" id="P04104">
    <property type="interactions" value="26"/>
</dbReference>
<dbReference type="IntAct" id="P04104">
    <property type="interactions" value="2"/>
</dbReference>
<dbReference type="STRING" id="10090.ENSMUSP00000023790"/>
<dbReference type="GlyGen" id="P04104">
    <property type="glycosylation" value="3 sites, 1 O-linked glycan (3 sites)"/>
</dbReference>
<dbReference type="iPTMnet" id="P04104"/>
<dbReference type="PhosphoSitePlus" id="P04104"/>
<dbReference type="SwissPalm" id="P04104"/>
<dbReference type="jPOST" id="P04104"/>
<dbReference type="PaxDb" id="10090-ENSMUSP00000023790"/>
<dbReference type="PeptideAtlas" id="P04104"/>
<dbReference type="ProteomicsDB" id="268942"/>
<dbReference type="Antibodypedia" id="3686">
    <property type="antibodies" value="1252 antibodies from 39 providers"/>
</dbReference>
<dbReference type="DNASU" id="16678"/>
<dbReference type="Ensembl" id="ENSMUST00000023790.5">
    <property type="protein sequence ID" value="ENSMUSP00000023790.4"/>
    <property type="gene ID" value="ENSMUSG00000046834.8"/>
</dbReference>
<dbReference type="GeneID" id="16678"/>
<dbReference type="KEGG" id="mmu:16678"/>
<dbReference type="UCSC" id="uc007xuc.1">
    <property type="organism name" value="mouse"/>
</dbReference>
<dbReference type="AGR" id="MGI:96698"/>
<dbReference type="CTD" id="3848"/>
<dbReference type="MGI" id="MGI:96698">
    <property type="gene designation" value="Krt1"/>
</dbReference>
<dbReference type="VEuPathDB" id="HostDB:ENSMUSG00000046834"/>
<dbReference type="eggNOG" id="ENOG502QQIF">
    <property type="taxonomic scope" value="Eukaryota"/>
</dbReference>
<dbReference type="GeneTree" id="ENSGT00940000162175"/>
<dbReference type="HOGENOM" id="CLU_012560_6_0_1"/>
<dbReference type="InParanoid" id="P04104"/>
<dbReference type="OMA" id="FGMAPGK"/>
<dbReference type="OrthoDB" id="9539572at2759"/>
<dbReference type="PhylomeDB" id="P04104"/>
<dbReference type="TreeFam" id="TF317854"/>
<dbReference type="Reactome" id="R-MMU-6798695">
    <property type="pathway name" value="Neutrophil degranulation"/>
</dbReference>
<dbReference type="Reactome" id="R-MMU-6805567">
    <property type="pathway name" value="Keratinization"/>
</dbReference>
<dbReference type="Reactome" id="R-MMU-6809371">
    <property type="pathway name" value="Formation of the cornified envelope"/>
</dbReference>
<dbReference type="BioGRID-ORCS" id="16678">
    <property type="hits" value="2 hits in 77 CRISPR screens"/>
</dbReference>
<dbReference type="ChiTaRS" id="Krt1">
    <property type="organism name" value="mouse"/>
</dbReference>
<dbReference type="PRO" id="PR:P04104"/>
<dbReference type="Proteomes" id="UP000000589">
    <property type="component" value="Chromosome 15"/>
</dbReference>
<dbReference type="RNAct" id="P04104">
    <property type="molecule type" value="protein"/>
</dbReference>
<dbReference type="Bgee" id="ENSMUSG00000046834">
    <property type="expression patterns" value="Expressed in lip and 83 other cell types or tissues"/>
</dbReference>
<dbReference type="GO" id="GO:0062023">
    <property type="term" value="C:collagen-containing extracellular matrix"/>
    <property type="evidence" value="ECO:0007005"/>
    <property type="project" value="UniProtKB"/>
</dbReference>
<dbReference type="GO" id="GO:0001533">
    <property type="term" value="C:cornified envelope"/>
    <property type="evidence" value="ECO:0000314"/>
    <property type="project" value="MGI"/>
</dbReference>
<dbReference type="GO" id="GO:0005737">
    <property type="term" value="C:cytoplasm"/>
    <property type="evidence" value="ECO:0000250"/>
    <property type="project" value="UniProtKB"/>
</dbReference>
<dbReference type="GO" id="GO:0045095">
    <property type="term" value="C:keratin filament"/>
    <property type="evidence" value="ECO:0000314"/>
    <property type="project" value="MGI"/>
</dbReference>
<dbReference type="GO" id="GO:0030246">
    <property type="term" value="F:carbohydrate binding"/>
    <property type="evidence" value="ECO:0007669"/>
    <property type="project" value="Ensembl"/>
</dbReference>
<dbReference type="GO" id="GO:0046982">
    <property type="term" value="F:protein heterodimerization activity"/>
    <property type="evidence" value="ECO:0000250"/>
    <property type="project" value="UniProtKB"/>
</dbReference>
<dbReference type="GO" id="GO:0030280">
    <property type="term" value="F:structural constituent of skin epidermis"/>
    <property type="evidence" value="ECO:0007669"/>
    <property type="project" value="Ensembl"/>
</dbReference>
<dbReference type="GO" id="GO:0001867">
    <property type="term" value="P:complement activation, lectin pathway"/>
    <property type="evidence" value="ECO:0007669"/>
    <property type="project" value="Ensembl"/>
</dbReference>
<dbReference type="GO" id="GO:0061436">
    <property type="term" value="P:establishment of skin barrier"/>
    <property type="evidence" value="ECO:0000315"/>
    <property type="project" value="MGI"/>
</dbReference>
<dbReference type="GO" id="GO:0050728">
    <property type="term" value="P:negative regulation of inflammatory response"/>
    <property type="evidence" value="ECO:0000315"/>
    <property type="project" value="MGI"/>
</dbReference>
<dbReference type="GO" id="GO:0051290">
    <property type="term" value="P:protein heterotetramerization"/>
    <property type="evidence" value="ECO:0000250"/>
    <property type="project" value="UniProtKB"/>
</dbReference>
<dbReference type="FunFam" id="1.20.5.1160:FF:000001">
    <property type="entry name" value="Keratin type II"/>
    <property type="match status" value="1"/>
</dbReference>
<dbReference type="FunFam" id="1.20.5.170:FF:000004">
    <property type="entry name" value="Keratin, type II cytoskeletal 5"/>
    <property type="match status" value="1"/>
</dbReference>
<dbReference type="FunFam" id="1.20.5.500:FF:000001">
    <property type="entry name" value="Type II keratin 23"/>
    <property type="match status" value="1"/>
</dbReference>
<dbReference type="Gene3D" id="1.20.5.170">
    <property type="match status" value="1"/>
</dbReference>
<dbReference type="Gene3D" id="1.20.5.500">
    <property type="entry name" value="Single helix bin"/>
    <property type="match status" value="1"/>
</dbReference>
<dbReference type="Gene3D" id="1.20.5.1160">
    <property type="entry name" value="Vasodilator-stimulated phosphoprotein"/>
    <property type="match status" value="1"/>
</dbReference>
<dbReference type="InterPro" id="IPR018039">
    <property type="entry name" value="IF_conserved"/>
</dbReference>
<dbReference type="InterPro" id="IPR039008">
    <property type="entry name" value="IF_rod_dom"/>
</dbReference>
<dbReference type="InterPro" id="IPR032449">
    <property type="entry name" value="Keratin_2_1_tail"/>
</dbReference>
<dbReference type="InterPro" id="IPR032444">
    <property type="entry name" value="Keratin_2_head"/>
</dbReference>
<dbReference type="InterPro" id="IPR003054">
    <property type="entry name" value="Keratin_II"/>
</dbReference>
<dbReference type="PANTHER" id="PTHR45616">
    <property type="entry name" value="GATA-TYPE DOMAIN-CONTAINING PROTEIN"/>
    <property type="match status" value="1"/>
</dbReference>
<dbReference type="PANTHER" id="PTHR45616:SF33">
    <property type="entry name" value="KERATIN, TYPE II CYTOSKELETAL 1"/>
    <property type="match status" value="1"/>
</dbReference>
<dbReference type="Pfam" id="PF00038">
    <property type="entry name" value="Filament"/>
    <property type="match status" value="1"/>
</dbReference>
<dbReference type="Pfam" id="PF16208">
    <property type="entry name" value="Keratin_2_head"/>
    <property type="match status" value="1"/>
</dbReference>
<dbReference type="Pfam" id="PF16210">
    <property type="entry name" value="Keratin_2_tail"/>
    <property type="match status" value="1"/>
</dbReference>
<dbReference type="PRINTS" id="PR01276">
    <property type="entry name" value="TYPE2KERATIN"/>
</dbReference>
<dbReference type="SMART" id="SM01391">
    <property type="entry name" value="Filament"/>
    <property type="match status" value="1"/>
</dbReference>
<dbReference type="SUPFAM" id="SSF64593">
    <property type="entry name" value="Intermediate filament protein, coiled coil region"/>
    <property type="match status" value="3"/>
</dbReference>
<dbReference type="PROSITE" id="PS00226">
    <property type="entry name" value="IF_ROD_1"/>
    <property type="match status" value="1"/>
</dbReference>
<dbReference type="PROSITE" id="PS51842">
    <property type="entry name" value="IF_ROD_2"/>
    <property type="match status" value="1"/>
</dbReference>
<accession>P04104</accession>
<accession>Q149E0</accession>
<accession>Q9D2K8</accession>
<reference key="1">
    <citation type="journal article" date="1985" name="J. Biol. Chem.">
        <title>Amino acid sequences of mouse and human epidermal type II keratins of Mr 67,000 provide a systematic basis for the structural and functional diversity of the end domains of keratin intermediate filament subunits.</title>
        <authorList>
            <person name="Steinert P.M."/>
            <person name="Parry D.A.D."/>
            <person name="Idler W.W."/>
            <person name="Johnson L.D."/>
            <person name="Steven A.C."/>
            <person name="Roop D.R."/>
        </authorList>
    </citation>
    <scope>NUCLEOTIDE SEQUENCE [MRNA]</scope>
</reference>
<reference key="2">
    <citation type="submission" date="1999-01" db="EMBL/GenBank/DDBJ databases">
        <authorList>
            <person name="Roop D.R."/>
        </authorList>
    </citation>
    <scope>SEQUENCE REVISION</scope>
</reference>
<reference key="3">
    <citation type="journal article" date="2005" name="Science">
        <title>The transcriptional landscape of the mammalian genome.</title>
        <authorList>
            <person name="Carninci P."/>
            <person name="Kasukawa T."/>
            <person name="Katayama S."/>
            <person name="Gough J."/>
            <person name="Frith M.C."/>
            <person name="Maeda N."/>
            <person name="Oyama R."/>
            <person name="Ravasi T."/>
            <person name="Lenhard B."/>
            <person name="Wells C."/>
            <person name="Kodzius R."/>
            <person name="Shimokawa K."/>
            <person name="Bajic V.B."/>
            <person name="Brenner S.E."/>
            <person name="Batalov S."/>
            <person name="Forrest A.R."/>
            <person name="Zavolan M."/>
            <person name="Davis M.J."/>
            <person name="Wilming L.G."/>
            <person name="Aidinis V."/>
            <person name="Allen J.E."/>
            <person name="Ambesi-Impiombato A."/>
            <person name="Apweiler R."/>
            <person name="Aturaliya R.N."/>
            <person name="Bailey T.L."/>
            <person name="Bansal M."/>
            <person name="Baxter L."/>
            <person name="Beisel K.W."/>
            <person name="Bersano T."/>
            <person name="Bono H."/>
            <person name="Chalk A.M."/>
            <person name="Chiu K.P."/>
            <person name="Choudhary V."/>
            <person name="Christoffels A."/>
            <person name="Clutterbuck D.R."/>
            <person name="Crowe M.L."/>
            <person name="Dalla E."/>
            <person name="Dalrymple B.P."/>
            <person name="de Bono B."/>
            <person name="Della Gatta G."/>
            <person name="di Bernardo D."/>
            <person name="Down T."/>
            <person name="Engstrom P."/>
            <person name="Fagiolini M."/>
            <person name="Faulkner G."/>
            <person name="Fletcher C.F."/>
            <person name="Fukushima T."/>
            <person name="Furuno M."/>
            <person name="Futaki S."/>
            <person name="Gariboldi M."/>
            <person name="Georgii-Hemming P."/>
            <person name="Gingeras T.R."/>
            <person name="Gojobori T."/>
            <person name="Green R.E."/>
            <person name="Gustincich S."/>
            <person name="Harbers M."/>
            <person name="Hayashi Y."/>
            <person name="Hensch T.K."/>
            <person name="Hirokawa N."/>
            <person name="Hill D."/>
            <person name="Huminiecki L."/>
            <person name="Iacono M."/>
            <person name="Ikeo K."/>
            <person name="Iwama A."/>
            <person name="Ishikawa T."/>
            <person name="Jakt M."/>
            <person name="Kanapin A."/>
            <person name="Katoh M."/>
            <person name="Kawasawa Y."/>
            <person name="Kelso J."/>
            <person name="Kitamura H."/>
            <person name="Kitano H."/>
            <person name="Kollias G."/>
            <person name="Krishnan S.P."/>
            <person name="Kruger A."/>
            <person name="Kummerfeld S.K."/>
            <person name="Kurochkin I.V."/>
            <person name="Lareau L.F."/>
            <person name="Lazarevic D."/>
            <person name="Lipovich L."/>
            <person name="Liu J."/>
            <person name="Liuni S."/>
            <person name="McWilliam S."/>
            <person name="Madan Babu M."/>
            <person name="Madera M."/>
            <person name="Marchionni L."/>
            <person name="Matsuda H."/>
            <person name="Matsuzawa S."/>
            <person name="Miki H."/>
            <person name="Mignone F."/>
            <person name="Miyake S."/>
            <person name="Morris K."/>
            <person name="Mottagui-Tabar S."/>
            <person name="Mulder N."/>
            <person name="Nakano N."/>
            <person name="Nakauchi H."/>
            <person name="Ng P."/>
            <person name="Nilsson R."/>
            <person name="Nishiguchi S."/>
            <person name="Nishikawa S."/>
            <person name="Nori F."/>
            <person name="Ohara O."/>
            <person name="Okazaki Y."/>
            <person name="Orlando V."/>
            <person name="Pang K.C."/>
            <person name="Pavan W.J."/>
            <person name="Pavesi G."/>
            <person name="Pesole G."/>
            <person name="Petrovsky N."/>
            <person name="Piazza S."/>
            <person name="Reed J."/>
            <person name="Reid J.F."/>
            <person name="Ring B.Z."/>
            <person name="Ringwald M."/>
            <person name="Rost B."/>
            <person name="Ruan Y."/>
            <person name="Salzberg S.L."/>
            <person name="Sandelin A."/>
            <person name="Schneider C."/>
            <person name="Schoenbach C."/>
            <person name="Sekiguchi K."/>
            <person name="Semple C.A."/>
            <person name="Seno S."/>
            <person name="Sessa L."/>
            <person name="Sheng Y."/>
            <person name="Shibata Y."/>
            <person name="Shimada H."/>
            <person name="Shimada K."/>
            <person name="Silva D."/>
            <person name="Sinclair B."/>
            <person name="Sperling S."/>
            <person name="Stupka E."/>
            <person name="Sugiura K."/>
            <person name="Sultana R."/>
            <person name="Takenaka Y."/>
            <person name="Taki K."/>
            <person name="Tammoja K."/>
            <person name="Tan S.L."/>
            <person name="Tang S."/>
            <person name="Taylor M.S."/>
            <person name="Tegner J."/>
            <person name="Teichmann S.A."/>
            <person name="Ueda H.R."/>
            <person name="van Nimwegen E."/>
            <person name="Verardo R."/>
            <person name="Wei C.L."/>
            <person name="Yagi K."/>
            <person name="Yamanishi H."/>
            <person name="Zabarovsky E."/>
            <person name="Zhu S."/>
            <person name="Zimmer A."/>
            <person name="Hide W."/>
            <person name="Bult C."/>
            <person name="Grimmond S.M."/>
            <person name="Teasdale R.D."/>
            <person name="Liu E.T."/>
            <person name="Brusic V."/>
            <person name="Quackenbush J."/>
            <person name="Wahlestedt C."/>
            <person name="Mattick J.S."/>
            <person name="Hume D.A."/>
            <person name="Kai C."/>
            <person name="Sasaki D."/>
            <person name="Tomaru Y."/>
            <person name="Fukuda S."/>
            <person name="Kanamori-Katayama M."/>
            <person name="Suzuki M."/>
            <person name="Aoki J."/>
            <person name="Arakawa T."/>
            <person name="Iida J."/>
            <person name="Imamura K."/>
            <person name="Itoh M."/>
            <person name="Kato T."/>
            <person name="Kawaji H."/>
            <person name="Kawagashira N."/>
            <person name="Kawashima T."/>
            <person name="Kojima M."/>
            <person name="Kondo S."/>
            <person name="Konno H."/>
            <person name="Nakano K."/>
            <person name="Ninomiya N."/>
            <person name="Nishio T."/>
            <person name="Okada M."/>
            <person name="Plessy C."/>
            <person name="Shibata K."/>
            <person name="Shiraki T."/>
            <person name="Suzuki S."/>
            <person name="Tagami M."/>
            <person name="Waki K."/>
            <person name="Watahiki A."/>
            <person name="Okamura-Oho Y."/>
            <person name="Suzuki H."/>
            <person name="Kawai J."/>
            <person name="Hayashizaki Y."/>
        </authorList>
    </citation>
    <scope>NUCLEOTIDE SEQUENCE [LARGE SCALE MRNA]</scope>
    <source>
        <strain>C57BL/6J</strain>
        <tissue>Head</tissue>
    </source>
</reference>
<reference key="4">
    <citation type="journal article" date="2004" name="Genome Res.">
        <title>The status, quality, and expansion of the NIH full-length cDNA project: the Mammalian Gene Collection (MGC).</title>
        <authorList>
            <consortium name="The MGC Project Team"/>
        </authorList>
    </citation>
    <scope>NUCLEOTIDE SEQUENCE [LARGE SCALE MRNA]</scope>
</reference>
<reference key="5">
    <citation type="submission" date="2009-01" db="UniProtKB">
        <authorList>
            <person name="Lubec G."/>
            <person name="Sunyer B."/>
            <person name="Chen W.-Q."/>
        </authorList>
    </citation>
    <scope>PROTEIN SEQUENCE OF 199-205; 208-219 AND 286-296</scope>
    <scope>IDENTIFICATION BY MASS SPECTROMETRY</scope>
    <source>
        <strain>OF1</strain>
        <tissue>Hippocampus</tissue>
    </source>
</reference>
<reference key="6">
    <citation type="journal article" date="2001" name="Mol. Biol. Cell">
        <title>Complete cytolysis and neonatal lethality in keratin 5 knockout mice reveal its fundamental role in skin integrity and in epidermolysis bullosa simplex.</title>
        <authorList>
            <person name="Peters B."/>
            <person name="Kirfel J."/>
            <person name="Bussow H."/>
            <person name="Vidal M."/>
            <person name="Magin T.M."/>
        </authorList>
    </citation>
    <scope>IDENTIFICATION IN A COMPLEX WITH KRT14</scope>
    <scope>INTERACTION WITH KRT14</scope>
    <scope>DEVELOPMENTAL STAGE</scope>
</reference>
<reference key="7">
    <citation type="journal article" date="2002" name="J. Invest. Dermatol.">
        <title>Sequential reorganization of cornified cell keratin filaments involving filaggrin-mediated compaction and keratin 1 deimination.</title>
        <authorList>
            <person name="Ishida-Yamamoto A."/>
            <person name="Senshu T."/>
            <person name="Eady R.A.J."/>
            <person name="Takahashi H."/>
            <person name="Shimizu H."/>
            <person name="Akiyama M."/>
            <person name="Iizuka H."/>
        </authorList>
    </citation>
    <scope>CITRULLINATION</scope>
</reference>
<reference key="8">
    <citation type="journal article" date="2010" name="Cell">
        <title>A tissue-specific atlas of mouse protein phosphorylation and expression.</title>
        <authorList>
            <person name="Huttlin E.L."/>
            <person name="Jedrychowski M.P."/>
            <person name="Elias J.E."/>
            <person name="Goswami T."/>
            <person name="Rad R."/>
            <person name="Beausoleil S.A."/>
            <person name="Villen J."/>
            <person name="Haas W."/>
            <person name="Sowa M.E."/>
            <person name="Gygi S.P."/>
        </authorList>
    </citation>
    <scope>PHOSPHORYLATION [LARGE SCALE ANALYSIS] AT SER-21 AND SER-24</scope>
    <scope>IDENTIFICATION BY MASS SPECTROMETRY [LARGE SCALE ANALYSIS]</scope>
    <source>
        <tissue>Brain</tissue>
        <tissue>Brown adipose tissue</tissue>
        <tissue>Heart</tissue>
        <tissue>Kidney</tissue>
        <tissue>Liver</tissue>
        <tissue>Lung</tissue>
        <tissue>Pancreas</tissue>
        <tissue>Spleen</tissue>
        <tissue>Testis</tissue>
    </source>
</reference>
<reference key="9">
    <citation type="journal article" date="2014" name="J. Invest. Dermatol.">
        <title>Loss of keratin K2 expression causes aberrant aggregation of K10, hyperkeratosis, and inflammation.</title>
        <authorList>
            <person name="Fischer H."/>
            <person name="Langbein L."/>
            <person name="Reichelt J."/>
            <person name="Praetzel-Wunder S."/>
            <person name="Buchberger M."/>
            <person name="Ghannadan M."/>
            <person name="Tschachler E."/>
            <person name="Eckhart L."/>
        </authorList>
    </citation>
    <scope>TISSUE SPECIFICITY</scope>
</reference>
<reference key="10">
    <citation type="journal article" date="2014" name="J. Invest. Dermatol.">
        <title>Interaction of plectin with keratins 5 and 14: dependence on several plectin domains and keratin quaternary structure.</title>
        <authorList>
            <person name="Bouameur J.E."/>
            <person name="Favre B."/>
            <person name="Fontao L."/>
            <person name="Lingasamy P."/>
            <person name="Begre N."/>
            <person name="Borradori L."/>
        </authorList>
    </citation>
    <scope>INTERACTION WITH PLEC AND KRT10</scope>
</reference>
<reference key="11">
    <citation type="journal article" date="2014" name="Mol. Cell. Proteomics">
        <title>Immunoaffinity enrichment and mass spectrometry analysis of protein methylation.</title>
        <authorList>
            <person name="Guo A."/>
            <person name="Gu H."/>
            <person name="Zhou J."/>
            <person name="Mulhern D."/>
            <person name="Wang Y."/>
            <person name="Lee K.A."/>
            <person name="Yang V."/>
            <person name="Aguiar M."/>
            <person name="Kornhauser J."/>
            <person name="Jia X."/>
            <person name="Ren J."/>
            <person name="Beausoleil S.A."/>
            <person name="Silva J.C."/>
            <person name="Vemulapalli V."/>
            <person name="Bedford M.T."/>
            <person name="Comb M.J."/>
        </authorList>
    </citation>
    <scope>METHYLATION [LARGE SCALE ANALYSIS] AT ARG-12; ARG-49; ARG-526; ARG-585 AND ARG-607</scope>
    <scope>IDENTIFICATION BY MASS SPECTROMETRY [LARGE SCALE ANALYSIS]</scope>
    <source>
        <tissue>Brain</tissue>
        <tissue>Embryo</tissue>
    </source>
</reference>
<reference key="12">
    <citation type="journal article" date="2006" name="J. Invest. Dermatol.">
        <title>A mouse keratin 1 mutation causes dark skin and epidermolytic hyperkeratosis.</title>
        <authorList>
            <person name="McGowan K.A."/>
            <person name="Aradhya S."/>
            <person name="Fuchs H."/>
            <person name="de Angelis M.H."/>
            <person name="Barsh G.S."/>
        </authorList>
    </citation>
    <scope>VARIANT EHK PRO-194</scope>
</reference>
<name>K2C1_MOUSE</name>
<sequence>MSLQCSSRSLCRGGGGSRNFSSGSAGLVSFQRRSTSSSMRRSGGGGGGRFSGGGFCGSSGSGFGSKSLMNLGGGRSISKSVAGGGGSFCGGFGGGSYGGGGFGGGSYGGGGFGGGSFGGGGFGGSGFGGGLGGGGGFGSGGGFGGGRFGSMGPVCPPGGIQEVTINQSLLQPLNVEVDPQIQKVKSQEREQIKSLNDKFASFIDKVRFLEQQNQVLQTKWELLQQVDTTTRTQNLDPFFENYISILRRKVDSLKSDQSRMDSELKNMQDLVEEYRTKYEDEINKRTNAENEFVTIKKDVDSAYMTKVELQAKADALQQDIDFFSALYQMEMSQMQTQISETNVVLSMDNNRSLDLDGIISEVKAQYDSICQRSKAEAETFYQSKYEELQITAGKHGDSVRNTKMEISELNRMIQRLRSEIDGCKKQISQIQQNINDAEQRGEKALKDAQNKLNEIEDALSQCKEDLARLLRDFQELMNTKLALDMEIATYKKLLEGEEIRMSGECTPNVSVSVSTSHTSMSGSSSRGGGSGGGRYGGGGSYGGGSGGGSYGGSSGGGGSGGSYGGGSGGGSYGGGSGGGSSGSHRGGSGGGGGSSGGSYGGSSGGGRGGSSSGGGGVKSSGSSTVKFVSTSYSRGTK</sequence>
<gene>
    <name type="primary">Krt1</name>
    <name type="synonym">Krt2-1</name>
</gene>
<organism>
    <name type="scientific">Mus musculus</name>
    <name type="common">Mouse</name>
    <dbReference type="NCBI Taxonomy" id="10090"/>
    <lineage>
        <taxon>Eukaryota</taxon>
        <taxon>Metazoa</taxon>
        <taxon>Chordata</taxon>
        <taxon>Craniata</taxon>
        <taxon>Vertebrata</taxon>
        <taxon>Euteleostomi</taxon>
        <taxon>Mammalia</taxon>
        <taxon>Eutheria</taxon>
        <taxon>Euarchontoglires</taxon>
        <taxon>Glires</taxon>
        <taxon>Rodentia</taxon>
        <taxon>Myomorpha</taxon>
        <taxon>Muroidea</taxon>
        <taxon>Muridae</taxon>
        <taxon>Murinae</taxon>
        <taxon>Mus</taxon>
        <taxon>Mus</taxon>
    </lineage>
</organism>
<comment type="function">
    <text evidence="1">May regulate the activity of kinases such as PKC and SRC via binding to integrin beta-1 (ITB1) and the receptor of activated protein C kinase 1 (RACK1). In complex with C1QBP is a high affinity receptor for kininogen-1/HMWK (By similarity).</text>
</comment>
<comment type="subunit">
    <text evidence="2 6 10">Heterotetramer of two type I and two type II keratins (PubMed:11408584, PubMed:24940650). Heterodimer with KRT10 (PubMed:24940650). Two heterodimers of KRT1 and KRT10 form a heterotetramer (By similarity). Forms a heterodimer with KRT14; the interaction is more abundant in the absence of KRT5 (PubMed:11408584). Interacts with PLEC isoform 1C, when in a heterodimer with KRT10 (PubMed:24940650). Interacts with ITGB1 in the presence of RACK1 and SRC, and with RACK1 (By similarity). Interacts with C1QBP; the association represents a cell surface kininogen receptor (By similarity). Interacts with EPPK1; interaction is dependent of higher-order structure of intermediate filament (By similarity).</text>
</comment>
<comment type="subcellular location">
    <subcellularLocation>
        <location evidence="2">Cell membrane</location>
    </subcellularLocation>
    <subcellularLocation>
        <location evidence="2">Cytoplasm</location>
    </subcellularLocation>
</comment>
<comment type="tissue specificity">
    <text evidence="9">Expressed in the infundibular regions of the ear, the interfollicular epidermis of the back, in the interscale regions containing hair follicles in the tail, and in the soles of the footpads (at protein level).</text>
</comment>
<comment type="developmental stage">
    <text evidence="6">Expressed in the skin at birth.</text>
</comment>
<comment type="PTM">
    <text evidence="7">Undergoes deimination of some arginine residues (citrullination).</text>
</comment>
<comment type="disease">
    <text>Defects in Krt1 are a cause of epidermolytic hyperkeratosis (EHK); also known as bullous congenital ichthyosiform erythroderma (BIE). EHK is a hereditary skin disorder characterized by intraepidermal blistering, a marked thickening of the stratum corneum, pigmentation of the skin and erosions at sites of trauma which are all present from birth.</text>
</comment>
<comment type="miscellaneous">
    <text>There are two types of cytoskeletal and microfibrillar keratin: I (acidic; 40-55 kDa) and II (neutral to basic; 56-70 kDa).</text>
</comment>
<comment type="similarity">
    <text evidence="4">Belongs to the intermediate filament family.</text>
</comment>
<keyword id="KW-1003">Cell membrane</keyword>
<keyword id="KW-0164">Citrullination</keyword>
<keyword id="KW-0175">Coiled coil</keyword>
<keyword id="KW-0963">Cytoplasm</keyword>
<keyword id="KW-0903">Direct protein sequencing</keyword>
<keyword id="KW-0225">Disease variant</keyword>
<keyword id="KW-0403">Intermediate filament</keyword>
<keyword id="KW-0416">Keratin</keyword>
<keyword id="KW-0472">Membrane</keyword>
<keyword id="KW-0488">Methylation</keyword>
<keyword id="KW-0597">Phosphoprotein</keyword>
<keyword id="KW-1185">Reference proteome</keyword>
<feature type="chain" id="PRO_0000063710" description="Keratin, type II cytoskeletal 1">
    <location>
        <begin position="1"/>
        <end position="637"/>
    </location>
</feature>
<feature type="domain" description="IF rod" evidence="4">
    <location>
        <begin position="188"/>
        <end position="501"/>
    </location>
</feature>
<feature type="region of interest" description="Head">
    <location>
        <begin position="1"/>
        <end position="187"/>
    </location>
</feature>
<feature type="region of interest" description="Coil 1A">
    <location>
        <begin position="188"/>
        <end position="223"/>
    </location>
</feature>
<feature type="region of interest" description="Linker 1">
    <location>
        <begin position="224"/>
        <end position="243"/>
    </location>
</feature>
<feature type="region of interest" description="Coil 1B">
    <location>
        <begin position="244"/>
        <end position="334"/>
    </location>
</feature>
<feature type="region of interest" description="Linker 12">
    <location>
        <begin position="335"/>
        <end position="358"/>
    </location>
</feature>
<feature type="region of interest" description="Coil 2">
    <location>
        <begin position="359"/>
        <end position="497"/>
    </location>
</feature>
<feature type="region of interest" description="Tail">
    <location>
        <begin position="498"/>
        <end position="637"/>
    </location>
</feature>
<feature type="region of interest" description="Disordered" evidence="5">
    <location>
        <begin position="505"/>
        <end position="533"/>
    </location>
</feature>
<feature type="region of interest" description="Disordered" evidence="5">
    <location>
        <begin position="563"/>
        <end position="637"/>
    </location>
</feature>
<feature type="coiled-coil region" evidence="3">
    <location>
        <begin position="180"/>
        <end position="328"/>
    </location>
</feature>
<feature type="coiled-coil region" evidence="3">
    <location>
        <begin position="397"/>
        <end position="483"/>
    </location>
</feature>
<feature type="compositionally biased region" description="Low complexity" evidence="5">
    <location>
        <begin position="509"/>
        <end position="524"/>
    </location>
</feature>
<feature type="compositionally biased region" description="Gly residues" evidence="5">
    <location>
        <begin position="563"/>
        <end position="618"/>
    </location>
</feature>
<feature type="compositionally biased region" description="Polar residues" evidence="5">
    <location>
        <begin position="624"/>
        <end position="637"/>
    </location>
</feature>
<feature type="site" description="Stutter">
    <location>
        <position position="452"/>
    </location>
</feature>
<feature type="modified residue" description="Omega-N-methylarginine" evidence="13">
    <location>
        <position position="12"/>
    </location>
</feature>
<feature type="modified residue" description="Phosphoserine" evidence="12">
    <location>
        <position position="21"/>
    </location>
</feature>
<feature type="modified residue" description="Phosphoserine" evidence="12">
    <location>
        <position position="24"/>
    </location>
</feature>
<feature type="modified residue" description="Omega-N-methylarginine" evidence="13">
    <location>
        <position position="49"/>
    </location>
</feature>
<feature type="modified residue" description="Phosphoserine" evidence="2">
    <location>
        <position position="67"/>
    </location>
</feature>
<feature type="modified residue" description="N6,N6-dimethyllysine" evidence="2">
    <location>
        <position position="284"/>
    </location>
</feature>
<feature type="modified residue" description="Phosphoserine" evidence="2">
    <location>
        <position position="352"/>
    </location>
</feature>
<feature type="modified residue" description="Omega-N-methylarginine" evidence="13">
    <location>
        <position position="526"/>
    </location>
</feature>
<feature type="modified residue" description="Omega-N-methylarginine" evidence="13">
    <location>
        <position position="585"/>
    </location>
</feature>
<feature type="modified residue" description="Omega-N-methylarginine" evidence="13">
    <location>
        <position position="607"/>
    </location>
</feature>
<feature type="sequence variant" description="In EHK." evidence="8">
    <original>S</original>
    <variation>P</variation>
    <location>
        <position position="194"/>
    </location>
</feature>
<feature type="sequence conflict" description="In Ref. 1; AAD05191." evidence="11" ref="1">
    <original>G</original>
    <variation>R</variation>
    <location>
        <position position="99"/>
    </location>
</feature>
<feature type="sequence conflict" description="In Ref. 1; AAD05191." evidence="11" ref="1">
    <original>L</original>
    <variation>S</variation>
    <location>
        <position position="131"/>
    </location>
</feature>
<feature type="sequence conflict" description="In Ref. 3; BAB31776." evidence="11" ref="3">
    <original>R</original>
    <variation>T</variation>
    <location>
        <position position="147"/>
    </location>
</feature>
<feature type="sequence conflict" description="In Ref. 1; AAD05191." evidence="11" ref="1">
    <original>SM</original>
    <variation>GY</variation>
    <location>
        <begin position="150"/>
        <end position="151"/>
    </location>
</feature>
<feature type="sequence conflict" description="In Ref. 1; AAD05191." evidence="11" ref="1">
    <original>PPG</original>
    <variation>SPS</variation>
    <location>
        <begin position="156"/>
        <end position="158"/>
    </location>
</feature>
<feature type="sequence conflict" description="In Ref. 1; AAD05191." evidence="11" ref="1">
    <original>I</original>
    <variation>L</variation>
    <location>
        <position position="165"/>
    </location>
</feature>
<feature type="sequence conflict" description="In Ref. 1; AAD05191." evidence="11" ref="1">
    <original>E</original>
    <variation>K</variation>
    <location>
        <position position="176"/>
    </location>
</feature>
<feature type="sequence conflict" description="In Ref. 1; AAD05191." evidence="11" ref="1">
    <original>Q</original>
    <variation>K</variation>
    <location>
        <position position="214"/>
    </location>
</feature>
<feature type="sequence conflict" description="In Ref. 1; AAD05191." evidence="11" ref="1">
    <original>D</original>
    <variation>E</variation>
    <location>
        <position position="261"/>
    </location>
</feature>
<feature type="sequence conflict" description="In Ref. 1; AAD05191." evidence="11" ref="1">
    <original>A</original>
    <variation>R</variation>
    <location>
        <position position="313"/>
    </location>
</feature>
<feature type="sequence conflict" description="In Ref. 1; AAD05191." evidence="11" ref="1">
    <original>D</original>
    <variation>N</variation>
    <location>
        <position position="321"/>
    </location>
</feature>
<feature type="sequence conflict" description="In Ref. 1; AAD05191." evidence="11" ref="1">
    <original>A</original>
    <variation>T</variation>
    <location>
        <position position="325"/>
    </location>
</feature>
<feature type="sequence conflict" description="In Ref. 1; AAD05191." evidence="11" ref="1">
    <original>SL</original>
    <variation>QF</variation>
    <location>
        <begin position="352"/>
        <end position="353"/>
    </location>
</feature>
<feature type="sequence conflict" description="In Ref. 3; BAB31776." evidence="11" ref="3">
    <original>S</original>
    <variation>Y</variation>
    <location>
        <position position="428"/>
    </location>
</feature>
<feature type="sequence conflict" description="In Ref. 1; AAD05191." evidence="11" ref="1">
    <location>
        <begin position="572"/>
        <end position="580"/>
    </location>
</feature>
<evidence type="ECO:0000250" key="1"/>
<evidence type="ECO:0000250" key="2">
    <source>
        <dbReference type="UniProtKB" id="P04264"/>
    </source>
</evidence>
<evidence type="ECO:0000255" key="3"/>
<evidence type="ECO:0000255" key="4">
    <source>
        <dbReference type="PROSITE-ProRule" id="PRU01188"/>
    </source>
</evidence>
<evidence type="ECO:0000256" key="5">
    <source>
        <dbReference type="SAM" id="MobiDB-lite"/>
    </source>
</evidence>
<evidence type="ECO:0000269" key="6">
    <source>
    </source>
</evidence>
<evidence type="ECO:0000269" key="7">
    <source>
    </source>
</evidence>
<evidence type="ECO:0000269" key="8">
    <source>
    </source>
</evidence>
<evidence type="ECO:0000269" key="9">
    <source>
    </source>
</evidence>
<evidence type="ECO:0000269" key="10">
    <source>
    </source>
</evidence>
<evidence type="ECO:0000305" key="11"/>
<evidence type="ECO:0007744" key="12">
    <source>
    </source>
</evidence>
<evidence type="ECO:0007744" key="13">
    <source>
    </source>
</evidence>